<gene>
    <name evidence="1" type="primary">bpt</name>
    <name type="ordered locus">XfasM23_0304</name>
</gene>
<reference key="1">
    <citation type="journal article" date="2010" name="J. Bacteriol.">
        <title>Whole genome sequences of two Xylella fastidiosa strains (M12 and M23) causing almond leaf scorch disease in California.</title>
        <authorList>
            <person name="Chen J."/>
            <person name="Xie G."/>
            <person name="Han S."/>
            <person name="Chertkov O."/>
            <person name="Sims D."/>
            <person name="Civerolo E.L."/>
        </authorList>
    </citation>
    <scope>NUCLEOTIDE SEQUENCE [LARGE SCALE GENOMIC DNA]</scope>
    <source>
        <strain>M23</strain>
    </source>
</reference>
<organism>
    <name type="scientific">Xylella fastidiosa (strain M23)</name>
    <dbReference type="NCBI Taxonomy" id="405441"/>
    <lineage>
        <taxon>Bacteria</taxon>
        <taxon>Pseudomonadati</taxon>
        <taxon>Pseudomonadota</taxon>
        <taxon>Gammaproteobacteria</taxon>
        <taxon>Lysobacterales</taxon>
        <taxon>Lysobacteraceae</taxon>
        <taxon>Xylella</taxon>
    </lineage>
</organism>
<name>BPT_XYLF2</name>
<evidence type="ECO:0000255" key="1">
    <source>
        <dbReference type="HAMAP-Rule" id="MF_00689"/>
    </source>
</evidence>
<comment type="function">
    <text evidence="1">Functions in the N-end rule pathway of protein degradation where it conjugates Leu from its aminoacyl-tRNA to the N-termini of proteins containing an N-terminal aspartate or glutamate.</text>
</comment>
<comment type="catalytic activity">
    <reaction evidence="1">
        <text>N-terminal L-glutamyl-[protein] + L-leucyl-tRNA(Leu) = N-terminal L-leucyl-L-glutamyl-[protein] + tRNA(Leu) + H(+)</text>
        <dbReference type="Rhea" id="RHEA:50412"/>
        <dbReference type="Rhea" id="RHEA-COMP:9613"/>
        <dbReference type="Rhea" id="RHEA-COMP:9622"/>
        <dbReference type="Rhea" id="RHEA-COMP:12664"/>
        <dbReference type="Rhea" id="RHEA-COMP:12668"/>
        <dbReference type="ChEBI" id="CHEBI:15378"/>
        <dbReference type="ChEBI" id="CHEBI:64721"/>
        <dbReference type="ChEBI" id="CHEBI:78442"/>
        <dbReference type="ChEBI" id="CHEBI:78494"/>
        <dbReference type="ChEBI" id="CHEBI:133041"/>
        <dbReference type="EC" id="2.3.2.29"/>
    </reaction>
</comment>
<comment type="catalytic activity">
    <reaction evidence="1">
        <text>N-terminal L-aspartyl-[protein] + L-leucyl-tRNA(Leu) = N-terminal L-leucyl-L-aspartyl-[protein] + tRNA(Leu) + H(+)</text>
        <dbReference type="Rhea" id="RHEA:50420"/>
        <dbReference type="Rhea" id="RHEA-COMP:9613"/>
        <dbReference type="Rhea" id="RHEA-COMP:9622"/>
        <dbReference type="Rhea" id="RHEA-COMP:12669"/>
        <dbReference type="Rhea" id="RHEA-COMP:12674"/>
        <dbReference type="ChEBI" id="CHEBI:15378"/>
        <dbReference type="ChEBI" id="CHEBI:64720"/>
        <dbReference type="ChEBI" id="CHEBI:78442"/>
        <dbReference type="ChEBI" id="CHEBI:78494"/>
        <dbReference type="ChEBI" id="CHEBI:133042"/>
        <dbReference type="EC" id="2.3.2.29"/>
    </reaction>
</comment>
<comment type="subcellular location">
    <subcellularLocation>
        <location evidence="1">Cytoplasm</location>
    </subcellularLocation>
</comment>
<comment type="similarity">
    <text evidence="1">Belongs to the R-transferase family. Bpt subfamily.</text>
</comment>
<proteinExistence type="inferred from homology"/>
<feature type="chain" id="PRO_1000132003" description="Aspartate/glutamate leucyltransferase">
    <location>
        <begin position="1"/>
        <end position="254"/>
    </location>
</feature>
<protein>
    <recommendedName>
        <fullName evidence="1">Aspartate/glutamate leucyltransferase</fullName>
        <ecNumber evidence="1">2.3.2.29</ecNumber>
    </recommendedName>
</protein>
<dbReference type="EC" id="2.3.2.29" evidence="1"/>
<dbReference type="EMBL" id="CP001011">
    <property type="protein sequence ID" value="ACB91753.1"/>
    <property type="molecule type" value="Genomic_DNA"/>
</dbReference>
<dbReference type="RefSeq" id="WP_004088071.1">
    <property type="nucleotide sequence ID" value="NC_010577.1"/>
</dbReference>
<dbReference type="SMR" id="B2I7M5"/>
<dbReference type="KEGG" id="xfn:XfasM23_0304"/>
<dbReference type="HOGENOM" id="CLU_077607_0_0_6"/>
<dbReference type="Proteomes" id="UP000001698">
    <property type="component" value="Chromosome"/>
</dbReference>
<dbReference type="GO" id="GO:0005737">
    <property type="term" value="C:cytoplasm"/>
    <property type="evidence" value="ECO:0007669"/>
    <property type="project" value="UniProtKB-SubCell"/>
</dbReference>
<dbReference type="GO" id="GO:0004057">
    <property type="term" value="F:arginyl-tRNA--protein transferase activity"/>
    <property type="evidence" value="ECO:0007669"/>
    <property type="project" value="InterPro"/>
</dbReference>
<dbReference type="GO" id="GO:0008914">
    <property type="term" value="F:leucyl-tRNA--protein transferase activity"/>
    <property type="evidence" value="ECO:0007669"/>
    <property type="project" value="UniProtKB-UniRule"/>
</dbReference>
<dbReference type="GO" id="GO:0071596">
    <property type="term" value="P:ubiquitin-dependent protein catabolic process via the N-end rule pathway"/>
    <property type="evidence" value="ECO:0007669"/>
    <property type="project" value="InterPro"/>
</dbReference>
<dbReference type="HAMAP" id="MF_00689">
    <property type="entry name" value="Bpt"/>
    <property type="match status" value="1"/>
</dbReference>
<dbReference type="InterPro" id="IPR016181">
    <property type="entry name" value="Acyl_CoA_acyltransferase"/>
</dbReference>
<dbReference type="InterPro" id="IPR017138">
    <property type="entry name" value="Asp_Glu_LeuTrfase"/>
</dbReference>
<dbReference type="InterPro" id="IPR030700">
    <property type="entry name" value="N-end_Aminoacyl_Trfase"/>
</dbReference>
<dbReference type="InterPro" id="IPR007472">
    <property type="entry name" value="N-end_Aminoacyl_Trfase_C"/>
</dbReference>
<dbReference type="InterPro" id="IPR007471">
    <property type="entry name" value="N-end_Aminoacyl_Trfase_N"/>
</dbReference>
<dbReference type="NCBIfam" id="NF002341">
    <property type="entry name" value="PRK01305.1-1"/>
    <property type="match status" value="1"/>
</dbReference>
<dbReference type="NCBIfam" id="NF002342">
    <property type="entry name" value="PRK01305.1-3"/>
    <property type="match status" value="1"/>
</dbReference>
<dbReference type="NCBIfam" id="NF002346">
    <property type="entry name" value="PRK01305.2-3"/>
    <property type="match status" value="1"/>
</dbReference>
<dbReference type="PANTHER" id="PTHR21367">
    <property type="entry name" value="ARGININE-TRNA-PROTEIN TRANSFERASE 1"/>
    <property type="match status" value="1"/>
</dbReference>
<dbReference type="PANTHER" id="PTHR21367:SF1">
    <property type="entry name" value="ARGINYL-TRNA--PROTEIN TRANSFERASE 1"/>
    <property type="match status" value="1"/>
</dbReference>
<dbReference type="Pfam" id="PF04377">
    <property type="entry name" value="ATE_C"/>
    <property type="match status" value="1"/>
</dbReference>
<dbReference type="Pfam" id="PF04376">
    <property type="entry name" value="ATE_N"/>
    <property type="match status" value="1"/>
</dbReference>
<dbReference type="PIRSF" id="PIRSF037208">
    <property type="entry name" value="ATE_pro_prd"/>
    <property type="match status" value="1"/>
</dbReference>
<dbReference type="SUPFAM" id="SSF55729">
    <property type="entry name" value="Acyl-CoA N-acyltransferases (Nat)"/>
    <property type="match status" value="1"/>
</dbReference>
<sequence length="254" mass="29530">MAIDSKPHDDLQLFKTNLHPCGYWPDRWASDLVMDPNDPRLGAIYPQTLAWGFRRSGNLLYRPHCEHCNACVPVRVNVNAFVPNRSQRRCLARNATLVTRIVPAERNAEQLSLYRRYLHQRHPDGGMDGHGAIEFDQFLIGPWGYGRFMEIREPATNGTPGQLLAVAVTDLTHQALSAVYTFYEPNAAARGLGTLAILHQIHWAQREQRPYLYLGYWIKDHFKMDYKRRFQKLEIYDGYRWRPFSTTYPTTHTL</sequence>
<keyword id="KW-0012">Acyltransferase</keyword>
<keyword id="KW-0963">Cytoplasm</keyword>
<keyword id="KW-0808">Transferase</keyword>
<accession>B2I7M5</accession>